<reference key="1">
    <citation type="journal article" date="2002" name="J. Bacteriol.">
        <title>Genome sequence and analysis of the oral bacterium Fusobacterium nucleatum strain ATCC 25586.</title>
        <authorList>
            <person name="Kapatral V."/>
            <person name="Anderson I."/>
            <person name="Ivanova N."/>
            <person name="Reznik G."/>
            <person name="Los T."/>
            <person name="Lykidis A."/>
            <person name="Bhattacharyya A."/>
            <person name="Bartman A."/>
            <person name="Gardner W."/>
            <person name="Grechkin G."/>
            <person name="Zhu L."/>
            <person name="Vasieva O."/>
            <person name="Chu L."/>
            <person name="Kogan Y."/>
            <person name="Chaga O."/>
            <person name="Goltsman E."/>
            <person name="Bernal A."/>
            <person name="Larsen N."/>
            <person name="D'Souza M."/>
            <person name="Walunas T."/>
            <person name="Pusch G."/>
            <person name="Haselkorn R."/>
            <person name="Fonstein M."/>
            <person name="Kyrpides N.C."/>
            <person name="Overbeek R."/>
        </authorList>
    </citation>
    <scope>NUCLEOTIDE SEQUENCE [LARGE SCALE GENOMIC DNA]</scope>
    <source>
        <strain>ATCC 25586 / DSM 15643 / BCRC 10681 / CIP 101130 / JCM 8532 / KCTC 2640 / LMG 13131 / VPI 4355</strain>
    </source>
</reference>
<feature type="chain" id="PRO_0000190699" description="UPF0758 protein FN0909">
    <location>
        <begin position="1"/>
        <end position="232"/>
    </location>
</feature>
<feature type="domain" description="MPN" evidence="1">
    <location>
        <begin position="110"/>
        <end position="232"/>
    </location>
</feature>
<feature type="short sequence motif" description="JAMM motif" evidence="1">
    <location>
        <begin position="181"/>
        <end position="194"/>
    </location>
</feature>
<feature type="binding site" evidence="1">
    <location>
        <position position="181"/>
    </location>
    <ligand>
        <name>Zn(2+)</name>
        <dbReference type="ChEBI" id="CHEBI:29105"/>
        <note>catalytic</note>
    </ligand>
</feature>
<feature type="binding site" evidence="1">
    <location>
        <position position="183"/>
    </location>
    <ligand>
        <name>Zn(2+)</name>
        <dbReference type="ChEBI" id="CHEBI:29105"/>
        <note>catalytic</note>
    </ligand>
</feature>
<feature type="binding site" evidence="1">
    <location>
        <position position="194"/>
    </location>
    <ligand>
        <name>Zn(2+)</name>
        <dbReference type="ChEBI" id="CHEBI:29105"/>
        <note>catalytic</note>
    </ligand>
</feature>
<name>Y909_FUSNN</name>
<dbReference type="EMBL" id="AE009951">
    <property type="protein sequence ID" value="AAL95105.1"/>
    <property type="molecule type" value="Genomic_DNA"/>
</dbReference>
<dbReference type="RefSeq" id="NP_603806.1">
    <property type="nucleotide sequence ID" value="NC_003454.1"/>
</dbReference>
<dbReference type="SMR" id="Q8RF15"/>
<dbReference type="FunCoup" id="Q8RF15">
    <property type="interactions" value="172"/>
</dbReference>
<dbReference type="STRING" id="190304.FN0909"/>
<dbReference type="PaxDb" id="190304-FN0909"/>
<dbReference type="EnsemblBacteria" id="AAL95105">
    <property type="protein sequence ID" value="AAL95105"/>
    <property type="gene ID" value="FN0909"/>
</dbReference>
<dbReference type="KEGG" id="fnu:FN0909"/>
<dbReference type="PATRIC" id="fig|190304.8.peg.1472"/>
<dbReference type="eggNOG" id="COG2003">
    <property type="taxonomic scope" value="Bacteria"/>
</dbReference>
<dbReference type="HOGENOM" id="CLU_073529_0_0_0"/>
<dbReference type="InParanoid" id="Q8RF15"/>
<dbReference type="BioCyc" id="FNUC190304:G1FZS-1491-MONOMER"/>
<dbReference type="Proteomes" id="UP000002521">
    <property type="component" value="Chromosome"/>
</dbReference>
<dbReference type="GO" id="GO:0046872">
    <property type="term" value="F:metal ion binding"/>
    <property type="evidence" value="ECO:0007669"/>
    <property type="project" value="UniProtKB-KW"/>
</dbReference>
<dbReference type="GO" id="GO:0008237">
    <property type="term" value="F:metallopeptidase activity"/>
    <property type="evidence" value="ECO:0007669"/>
    <property type="project" value="UniProtKB-KW"/>
</dbReference>
<dbReference type="GO" id="GO:0006508">
    <property type="term" value="P:proteolysis"/>
    <property type="evidence" value="ECO:0007669"/>
    <property type="project" value="UniProtKB-KW"/>
</dbReference>
<dbReference type="CDD" id="cd08071">
    <property type="entry name" value="MPN_DUF2466"/>
    <property type="match status" value="1"/>
</dbReference>
<dbReference type="Gene3D" id="1.10.150.20">
    <property type="entry name" value="5' to 3' exonuclease, C-terminal subdomain"/>
    <property type="match status" value="1"/>
</dbReference>
<dbReference type="Gene3D" id="3.40.140.10">
    <property type="entry name" value="Cytidine Deaminase, domain 2"/>
    <property type="match status" value="1"/>
</dbReference>
<dbReference type="InterPro" id="IPR037518">
    <property type="entry name" value="MPN"/>
</dbReference>
<dbReference type="InterPro" id="IPR025657">
    <property type="entry name" value="RadC_JAB"/>
</dbReference>
<dbReference type="InterPro" id="IPR010994">
    <property type="entry name" value="RuvA_2-like"/>
</dbReference>
<dbReference type="InterPro" id="IPR001405">
    <property type="entry name" value="UPF0758"/>
</dbReference>
<dbReference type="InterPro" id="IPR046778">
    <property type="entry name" value="UPF0758_N"/>
</dbReference>
<dbReference type="NCBIfam" id="NF000642">
    <property type="entry name" value="PRK00024.1"/>
    <property type="match status" value="1"/>
</dbReference>
<dbReference type="NCBIfam" id="TIGR00608">
    <property type="entry name" value="radc"/>
    <property type="match status" value="1"/>
</dbReference>
<dbReference type="PANTHER" id="PTHR30471">
    <property type="entry name" value="DNA REPAIR PROTEIN RADC"/>
    <property type="match status" value="1"/>
</dbReference>
<dbReference type="PANTHER" id="PTHR30471:SF3">
    <property type="entry name" value="UPF0758 PROTEIN YEES-RELATED"/>
    <property type="match status" value="1"/>
</dbReference>
<dbReference type="Pfam" id="PF04002">
    <property type="entry name" value="RadC"/>
    <property type="match status" value="1"/>
</dbReference>
<dbReference type="Pfam" id="PF20582">
    <property type="entry name" value="UPF0758_N"/>
    <property type="match status" value="1"/>
</dbReference>
<dbReference type="SUPFAM" id="SSF47781">
    <property type="entry name" value="RuvA domain 2-like"/>
    <property type="match status" value="1"/>
</dbReference>
<dbReference type="PROSITE" id="PS50249">
    <property type="entry name" value="MPN"/>
    <property type="match status" value="1"/>
</dbReference>
<evidence type="ECO:0000255" key="1">
    <source>
        <dbReference type="PROSITE-ProRule" id="PRU01182"/>
    </source>
</evidence>
<evidence type="ECO:0000305" key="2"/>
<organism>
    <name type="scientific">Fusobacterium nucleatum subsp. nucleatum (strain ATCC 25586 / DSM 15643 / BCRC 10681 / CIP 101130 / JCM 8532 / KCTC 2640 / LMG 13131 / VPI 4355)</name>
    <dbReference type="NCBI Taxonomy" id="190304"/>
    <lineage>
        <taxon>Bacteria</taxon>
        <taxon>Fusobacteriati</taxon>
        <taxon>Fusobacteriota</taxon>
        <taxon>Fusobacteriia</taxon>
        <taxon>Fusobacteriales</taxon>
        <taxon>Fusobacteriaceae</taxon>
        <taxon>Fusobacterium</taxon>
    </lineage>
</organism>
<protein>
    <recommendedName>
        <fullName>UPF0758 protein FN0909</fullName>
    </recommendedName>
</protein>
<comment type="similarity">
    <text evidence="2">Belongs to the UPF0758 family.</text>
</comment>
<sequence length="232" mass="26731">MSEKDNQGHRERIREKFFNNGIDGFAEYEILELLLTYCIPRKDTKPIAKELLNKFKSLDNVFKASFDKLSTIDGLGKNSITFLKLLGELPSIIYKDELKNKKLIDKETLKISNKDILLKYLRNKIGYEEIEKFYVIYLSSSNEVIEFEENSVGTLDRSSVYPREIYKKVINLNAKSIILAHNHPSDNITPSKSDIELTNEIAKGLKNFGALLIEHIIITKNSYFSFLEEGLI</sequence>
<accession>Q8RF15</accession>
<gene>
    <name type="ordered locus">FN0909</name>
</gene>
<proteinExistence type="inferred from homology"/>
<keyword id="KW-0378">Hydrolase</keyword>
<keyword id="KW-0479">Metal-binding</keyword>
<keyword id="KW-0482">Metalloprotease</keyword>
<keyword id="KW-0645">Protease</keyword>
<keyword id="KW-1185">Reference proteome</keyword>
<keyword id="KW-0862">Zinc</keyword>